<name>FRDD_SHIBS</name>
<keyword id="KW-0997">Cell inner membrane</keyword>
<keyword id="KW-1003">Cell membrane</keyword>
<keyword id="KW-0472">Membrane</keyword>
<keyword id="KW-0812">Transmembrane</keyword>
<keyword id="KW-1133">Transmembrane helix</keyword>
<organism>
    <name type="scientific">Shigella boydii serotype 4 (strain Sb227)</name>
    <dbReference type="NCBI Taxonomy" id="300268"/>
    <lineage>
        <taxon>Bacteria</taxon>
        <taxon>Pseudomonadati</taxon>
        <taxon>Pseudomonadota</taxon>
        <taxon>Gammaproteobacteria</taxon>
        <taxon>Enterobacterales</taxon>
        <taxon>Enterobacteriaceae</taxon>
        <taxon>Shigella</taxon>
    </lineage>
</organism>
<dbReference type="EMBL" id="CP000036">
    <property type="protein sequence ID" value="ABB68722.1"/>
    <property type="molecule type" value="Genomic_DNA"/>
</dbReference>
<dbReference type="RefSeq" id="WP_001299198.1">
    <property type="nucleotide sequence ID" value="NC_007613.1"/>
</dbReference>
<dbReference type="SMR" id="Q31T86"/>
<dbReference type="GeneID" id="93777671"/>
<dbReference type="KEGG" id="sbo:SBO_4305"/>
<dbReference type="HOGENOM" id="CLU_168367_0_0_6"/>
<dbReference type="Proteomes" id="UP000007067">
    <property type="component" value="Chromosome"/>
</dbReference>
<dbReference type="GO" id="GO:0045283">
    <property type="term" value="C:fumarate reductase complex"/>
    <property type="evidence" value="ECO:0007669"/>
    <property type="project" value="UniProtKB-UniRule"/>
</dbReference>
<dbReference type="GO" id="GO:0005886">
    <property type="term" value="C:plasma membrane"/>
    <property type="evidence" value="ECO:0007669"/>
    <property type="project" value="UniProtKB-SubCell"/>
</dbReference>
<dbReference type="GO" id="GO:0000104">
    <property type="term" value="F:succinate dehydrogenase activity"/>
    <property type="evidence" value="ECO:0007669"/>
    <property type="project" value="UniProtKB-UniRule"/>
</dbReference>
<dbReference type="GO" id="GO:0006106">
    <property type="term" value="P:fumarate metabolic process"/>
    <property type="evidence" value="ECO:0007669"/>
    <property type="project" value="InterPro"/>
</dbReference>
<dbReference type="CDD" id="cd00547">
    <property type="entry name" value="QFR_TypeD_subunitD"/>
    <property type="match status" value="1"/>
</dbReference>
<dbReference type="FunFam" id="1.20.1300.10:FF:000002">
    <property type="entry name" value="Fumarate reductase subunit D"/>
    <property type="match status" value="1"/>
</dbReference>
<dbReference type="Gene3D" id="1.20.1300.10">
    <property type="entry name" value="Fumarate reductase/succinate dehydrogenase, transmembrane subunit"/>
    <property type="match status" value="1"/>
</dbReference>
<dbReference type="HAMAP" id="MF_00709">
    <property type="entry name" value="Fumarate_red_D"/>
    <property type="match status" value="1"/>
</dbReference>
<dbReference type="InterPro" id="IPR003418">
    <property type="entry name" value="Fumarate_red_D"/>
</dbReference>
<dbReference type="InterPro" id="IPR034804">
    <property type="entry name" value="SQR/QFR_C/D"/>
</dbReference>
<dbReference type="NCBIfam" id="NF003977">
    <property type="entry name" value="PRK05470.1-1"/>
    <property type="match status" value="1"/>
</dbReference>
<dbReference type="Pfam" id="PF02313">
    <property type="entry name" value="Fumarate_red_D"/>
    <property type="match status" value="1"/>
</dbReference>
<dbReference type="PIRSF" id="PIRSF000179">
    <property type="entry name" value="FrdD"/>
    <property type="match status" value="1"/>
</dbReference>
<dbReference type="SUPFAM" id="SSF81343">
    <property type="entry name" value="Fumarate reductase respiratory complex transmembrane subunits"/>
    <property type="match status" value="1"/>
</dbReference>
<evidence type="ECO:0000255" key="1">
    <source>
        <dbReference type="HAMAP-Rule" id="MF_00709"/>
    </source>
</evidence>
<protein>
    <recommendedName>
        <fullName evidence="1">Fumarate reductase subunit D</fullName>
    </recommendedName>
    <alternativeName>
        <fullName evidence="1">Fumarate reductase 13 kDa hydrophobic protein</fullName>
    </alternativeName>
    <alternativeName>
        <fullName evidence="1">Quinol-fumarate reductase subunit D</fullName>
        <shortName evidence="1">QFR subunit D</shortName>
    </alternativeName>
</protein>
<accession>Q31T86</accession>
<reference key="1">
    <citation type="journal article" date="2005" name="Nucleic Acids Res.">
        <title>Genome dynamics and diversity of Shigella species, the etiologic agents of bacillary dysentery.</title>
        <authorList>
            <person name="Yang F."/>
            <person name="Yang J."/>
            <person name="Zhang X."/>
            <person name="Chen L."/>
            <person name="Jiang Y."/>
            <person name="Yan Y."/>
            <person name="Tang X."/>
            <person name="Wang J."/>
            <person name="Xiong Z."/>
            <person name="Dong J."/>
            <person name="Xue Y."/>
            <person name="Zhu Y."/>
            <person name="Xu X."/>
            <person name="Sun L."/>
            <person name="Chen S."/>
            <person name="Nie H."/>
            <person name="Peng J."/>
            <person name="Xu J."/>
            <person name="Wang Y."/>
            <person name="Yuan Z."/>
            <person name="Wen Y."/>
            <person name="Yao Z."/>
            <person name="Shen Y."/>
            <person name="Qiang B."/>
            <person name="Hou Y."/>
            <person name="Yu J."/>
            <person name="Jin Q."/>
        </authorList>
    </citation>
    <scope>NUCLEOTIDE SEQUENCE [LARGE SCALE GENOMIC DNA]</scope>
    <source>
        <strain>Sb227</strain>
    </source>
</reference>
<comment type="function">
    <text evidence="1">Two distinct, membrane-bound, FAD-containing enzymes are responsible for the catalysis of fumarate and succinate interconversion; fumarate reductase is used in anaerobic growth, and succinate dehydrogenase is used in aerobic growth. Anchors the catalytic components of the fumarate reductase complex to the cell inner membrane, binds quinones.</text>
</comment>
<comment type="subunit">
    <text evidence="1">Part of an enzyme complex containing four subunits: a flavoprotein (FrdA), an iron-sulfur protein (FrdB), and two hydrophobic anchor proteins (FrdC and FrdD).</text>
</comment>
<comment type="subcellular location">
    <subcellularLocation>
        <location evidence="1">Cell inner membrane</location>
        <topology evidence="1">Multi-pass membrane protein</topology>
    </subcellularLocation>
</comment>
<comment type="similarity">
    <text evidence="1">Belongs to the FrdD family.</text>
</comment>
<feature type="chain" id="PRO_1000045559" description="Fumarate reductase subunit D">
    <location>
        <begin position="1"/>
        <end position="119"/>
    </location>
</feature>
<feature type="transmembrane region" description="Helical" evidence="1">
    <location>
        <begin position="26"/>
        <end position="46"/>
    </location>
</feature>
<feature type="transmembrane region" description="Helical" evidence="1">
    <location>
        <begin position="55"/>
        <end position="75"/>
    </location>
</feature>
<feature type="transmembrane region" description="Helical" evidence="1">
    <location>
        <begin position="99"/>
        <end position="119"/>
    </location>
</feature>
<gene>
    <name evidence="1" type="primary">frdD</name>
    <name type="ordered locus">SBO_4305</name>
</gene>
<proteinExistence type="inferred from homology"/>
<sequence>MINPNPKRSDEPVFWGLFGAGGMWSAIIAPVMILLVGILLPLGLFPGDALSYERVLAFAQSFIGRVFLFLMIVLPLWCGLHRMHHAMHDLKIHVPAGKWVFYGLAAILTVVTLIGIVTI</sequence>